<gene>
    <name type="primary">MT-CYB</name>
    <name type="synonym">COB</name>
    <name type="synonym">CYTB</name>
    <name type="synonym">MTCYB</name>
</gene>
<organism>
    <name type="scientific">Chionomys roberti</name>
    <name type="common">Robert's snow vole</name>
    <name type="synonym">Microtus roberti</name>
    <dbReference type="NCBI Taxonomy" id="269650"/>
    <lineage>
        <taxon>Eukaryota</taxon>
        <taxon>Metazoa</taxon>
        <taxon>Chordata</taxon>
        <taxon>Craniata</taxon>
        <taxon>Vertebrata</taxon>
        <taxon>Euteleostomi</taxon>
        <taxon>Mammalia</taxon>
        <taxon>Eutheria</taxon>
        <taxon>Euarchontoglires</taxon>
        <taxon>Glires</taxon>
        <taxon>Rodentia</taxon>
        <taxon>Myomorpha</taxon>
        <taxon>Muroidea</taxon>
        <taxon>Cricetidae</taxon>
        <taxon>Arvicolinae</taxon>
        <taxon>Chionomys</taxon>
    </lineage>
</organism>
<feature type="chain" id="PRO_0000255005" description="Cytochrome b">
    <location>
        <begin position="1"/>
        <end position="380"/>
    </location>
</feature>
<feature type="transmembrane region" description="Helical" evidence="2">
    <location>
        <begin position="33"/>
        <end position="53"/>
    </location>
</feature>
<feature type="transmembrane region" description="Helical" evidence="2">
    <location>
        <begin position="77"/>
        <end position="98"/>
    </location>
</feature>
<feature type="transmembrane region" description="Helical" evidence="2">
    <location>
        <begin position="113"/>
        <end position="133"/>
    </location>
</feature>
<feature type="transmembrane region" description="Helical" evidence="2">
    <location>
        <begin position="178"/>
        <end position="198"/>
    </location>
</feature>
<feature type="transmembrane region" description="Helical" evidence="2">
    <location>
        <begin position="226"/>
        <end position="246"/>
    </location>
</feature>
<feature type="transmembrane region" description="Helical" evidence="2">
    <location>
        <begin position="288"/>
        <end position="308"/>
    </location>
</feature>
<feature type="transmembrane region" description="Helical" evidence="2">
    <location>
        <begin position="320"/>
        <end position="340"/>
    </location>
</feature>
<feature type="transmembrane region" description="Helical" evidence="2">
    <location>
        <begin position="347"/>
        <end position="367"/>
    </location>
</feature>
<feature type="binding site" description="axial binding residue" evidence="2">
    <location>
        <position position="83"/>
    </location>
    <ligand>
        <name>heme b</name>
        <dbReference type="ChEBI" id="CHEBI:60344"/>
        <label>b562</label>
    </ligand>
    <ligandPart>
        <name>Fe</name>
        <dbReference type="ChEBI" id="CHEBI:18248"/>
    </ligandPart>
</feature>
<feature type="binding site" description="axial binding residue" evidence="2">
    <location>
        <position position="97"/>
    </location>
    <ligand>
        <name>heme b</name>
        <dbReference type="ChEBI" id="CHEBI:60344"/>
        <label>b566</label>
    </ligand>
    <ligandPart>
        <name>Fe</name>
        <dbReference type="ChEBI" id="CHEBI:18248"/>
    </ligandPart>
</feature>
<feature type="binding site" description="axial binding residue" evidence="2">
    <location>
        <position position="182"/>
    </location>
    <ligand>
        <name>heme b</name>
        <dbReference type="ChEBI" id="CHEBI:60344"/>
        <label>b562</label>
    </ligand>
    <ligandPart>
        <name>Fe</name>
        <dbReference type="ChEBI" id="CHEBI:18248"/>
    </ligandPart>
</feature>
<feature type="binding site" description="axial binding residue" evidence="2">
    <location>
        <position position="196"/>
    </location>
    <ligand>
        <name>heme b</name>
        <dbReference type="ChEBI" id="CHEBI:60344"/>
        <label>b566</label>
    </ligand>
    <ligandPart>
        <name>Fe</name>
        <dbReference type="ChEBI" id="CHEBI:18248"/>
    </ligandPart>
</feature>
<feature type="binding site" evidence="2">
    <location>
        <position position="201"/>
    </location>
    <ligand>
        <name>a ubiquinone</name>
        <dbReference type="ChEBI" id="CHEBI:16389"/>
    </ligand>
</feature>
<keyword id="KW-0249">Electron transport</keyword>
<keyword id="KW-0349">Heme</keyword>
<keyword id="KW-0408">Iron</keyword>
<keyword id="KW-0472">Membrane</keyword>
<keyword id="KW-0479">Metal-binding</keyword>
<keyword id="KW-0496">Mitochondrion</keyword>
<keyword id="KW-0999">Mitochondrion inner membrane</keyword>
<keyword id="KW-0679">Respiratory chain</keyword>
<keyword id="KW-0812">Transmembrane</keyword>
<keyword id="KW-1133">Transmembrane helix</keyword>
<keyword id="KW-0813">Transport</keyword>
<keyword id="KW-0830">Ubiquinone</keyword>
<comment type="function">
    <text evidence="2">Component of the ubiquinol-cytochrome c reductase complex (complex III or cytochrome b-c1 complex) that is part of the mitochondrial respiratory chain. The b-c1 complex mediates electron transfer from ubiquinol to cytochrome c. Contributes to the generation of a proton gradient across the mitochondrial membrane that is then used for ATP synthesis.</text>
</comment>
<comment type="cofactor">
    <cofactor evidence="2">
        <name>heme b</name>
        <dbReference type="ChEBI" id="CHEBI:60344"/>
    </cofactor>
    <text evidence="2">Binds 2 heme b groups non-covalently.</text>
</comment>
<comment type="subunit">
    <text evidence="2">The cytochrome bc1 complex contains 11 subunits: 3 respiratory subunits (MT-CYB, CYC1 and UQCRFS1), 2 core proteins (UQCRC1 and UQCRC2) and 6 low-molecular weight proteins (UQCRH/QCR6, UQCRB/QCR7, UQCRQ/QCR8, UQCR10/QCR9, UQCR11/QCR10 and a cleavage product of UQCRFS1). This cytochrome bc1 complex then forms a dimer.</text>
</comment>
<comment type="subcellular location">
    <subcellularLocation>
        <location evidence="2">Mitochondrion inner membrane</location>
        <topology evidence="2">Multi-pass membrane protein</topology>
    </subcellularLocation>
</comment>
<comment type="miscellaneous">
    <text evidence="1">Heme 1 (or BL or b562) is low-potential and absorbs at about 562 nm, and heme 2 (or BH or b566) is high-potential and absorbs at about 566 nm.</text>
</comment>
<comment type="similarity">
    <text evidence="3 4">Belongs to the cytochrome b family.</text>
</comment>
<comment type="caution">
    <text evidence="2">The full-length protein contains only eight transmembrane helices, not nine as predicted by bioinformatics tools.</text>
</comment>
<name>CYB_CHIRO</name>
<geneLocation type="mitochondrion"/>
<reference key="1">
    <citation type="journal article" date="2004" name="Mol. Phylogenet. Evol.">
        <title>Molecular phylogeny of the speciose vole genus Microtus (Arvicolinae, Rodentia) inferred from mitochondrial DNA sequences.</title>
        <authorList>
            <person name="Jaarola M."/>
            <person name="Martinkova N."/>
            <person name="Gunduz I."/>
            <person name="Brunhoff C."/>
            <person name="Zima J."/>
            <person name="Nadachowski A."/>
            <person name="Amori G."/>
            <person name="Bulatova N.S."/>
            <person name="Chondropoulos B."/>
            <person name="Fraguedakis-Tsolis S."/>
            <person name="Gonzalez-Esteban J."/>
            <person name="Lopez-Fuster M.J."/>
            <person name="Kandaurov A.S."/>
            <person name="Kefelioglu H."/>
            <person name="Mathias M.L."/>
            <person name="Villate I."/>
            <person name="Searle J.B."/>
        </authorList>
    </citation>
    <scope>NUCLEOTIDE SEQUENCE [GENOMIC DNA]</scope>
</reference>
<accession>Q6JDN5</accession>
<evidence type="ECO:0000250" key="1"/>
<evidence type="ECO:0000250" key="2">
    <source>
        <dbReference type="UniProtKB" id="P00157"/>
    </source>
</evidence>
<evidence type="ECO:0000255" key="3">
    <source>
        <dbReference type="PROSITE-ProRule" id="PRU00967"/>
    </source>
</evidence>
<evidence type="ECO:0000255" key="4">
    <source>
        <dbReference type="PROSITE-ProRule" id="PRU00968"/>
    </source>
</evidence>
<sequence length="380" mass="42844">MTIIRKKHPLIKIINHSFIDLPAPSNISSWWNFGSLLGLCLIIQILTGLFLAMHYTSDTSTAFSSVAHICRDVNYGWLIRYMHANGASMFFICLFLHVGRGIYYGSYNMIETWNMGIILLFAVMATAFMGYVLPWGQMSFWGATVITNLLSAIPYIGTTLVEWIWGGFSVDKATLTRFFAFHFILPFIITALVLVHLLFLHETGSNNPTGLNSDADKIPFHPYYTIKDFLGVLVLLMAFMILVLFFPDILGDPDNYTPANPLNTPPHIKPEWYFLFAYAILRSIPNKLGGVLALILSILILALMPLLHTSKQRALTFRPITQTMYWILVADLLILTWIGGQPVEYPFIMIGQAASIAYFAIIVIFMPIAGMIENNILDLD</sequence>
<dbReference type="EMBL" id="AY513850">
    <property type="protein sequence ID" value="AAS82842.1"/>
    <property type="molecule type" value="Genomic_DNA"/>
</dbReference>
<dbReference type="EMBL" id="AY513851">
    <property type="protein sequence ID" value="AAS82843.1"/>
    <property type="molecule type" value="Genomic_DNA"/>
</dbReference>
<dbReference type="SMR" id="Q6JDN5"/>
<dbReference type="GO" id="GO:0005743">
    <property type="term" value="C:mitochondrial inner membrane"/>
    <property type="evidence" value="ECO:0007669"/>
    <property type="project" value="UniProtKB-SubCell"/>
</dbReference>
<dbReference type="GO" id="GO:0045275">
    <property type="term" value="C:respiratory chain complex III"/>
    <property type="evidence" value="ECO:0007669"/>
    <property type="project" value="InterPro"/>
</dbReference>
<dbReference type="GO" id="GO:0046872">
    <property type="term" value="F:metal ion binding"/>
    <property type="evidence" value="ECO:0007669"/>
    <property type="project" value="UniProtKB-KW"/>
</dbReference>
<dbReference type="GO" id="GO:0008121">
    <property type="term" value="F:ubiquinol-cytochrome-c reductase activity"/>
    <property type="evidence" value="ECO:0007669"/>
    <property type="project" value="InterPro"/>
</dbReference>
<dbReference type="GO" id="GO:0006122">
    <property type="term" value="P:mitochondrial electron transport, ubiquinol to cytochrome c"/>
    <property type="evidence" value="ECO:0007669"/>
    <property type="project" value="TreeGrafter"/>
</dbReference>
<dbReference type="CDD" id="cd00290">
    <property type="entry name" value="cytochrome_b_C"/>
    <property type="match status" value="1"/>
</dbReference>
<dbReference type="CDD" id="cd00284">
    <property type="entry name" value="Cytochrome_b_N"/>
    <property type="match status" value="1"/>
</dbReference>
<dbReference type="FunFam" id="1.20.810.10:FF:000002">
    <property type="entry name" value="Cytochrome b"/>
    <property type="match status" value="1"/>
</dbReference>
<dbReference type="Gene3D" id="1.20.810.10">
    <property type="entry name" value="Cytochrome Bc1 Complex, Chain C"/>
    <property type="match status" value="1"/>
</dbReference>
<dbReference type="InterPro" id="IPR005798">
    <property type="entry name" value="Cyt_b/b6_C"/>
</dbReference>
<dbReference type="InterPro" id="IPR036150">
    <property type="entry name" value="Cyt_b/b6_C_sf"/>
</dbReference>
<dbReference type="InterPro" id="IPR005797">
    <property type="entry name" value="Cyt_b/b6_N"/>
</dbReference>
<dbReference type="InterPro" id="IPR027387">
    <property type="entry name" value="Cytb/b6-like_sf"/>
</dbReference>
<dbReference type="InterPro" id="IPR030689">
    <property type="entry name" value="Cytochrome_b"/>
</dbReference>
<dbReference type="InterPro" id="IPR048260">
    <property type="entry name" value="Cytochrome_b_C_euk/bac"/>
</dbReference>
<dbReference type="InterPro" id="IPR048259">
    <property type="entry name" value="Cytochrome_b_N_euk/bac"/>
</dbReference>
<dbReference type="InterPro" id="IPR016174">
    <property type="entry name" value="Di-haem_cyt_TM"/>
</dbReference>
<dbReference type="PANTHER" id="PTHR19271">
    <property type="entry name" value="CYTOCHROME B"/>
    <property type="match status" value="1"/>
</dbReference>
<dbReference type="PANTHER" id="PTHR19271:SF16">
    <property type="entry name" value="CYTOCHROME B"/>
    <property type="match status" value="1"/>
</dbReference>
<dbReference type="Pfam" id="PF00032">
    <property type="entry name" value="Cytochrom_B_C"/>
    <property type="match status" value="1"/>
</dbReference>
<dbReference type="Pfam" id="PF00033">
    <property type="entry name" value="Cytochrome_B"/>
    <property type="match status" value="1"/>
</dbReference>
<dbReference type="PIRSF" id="PIRSF038885">
    <property type="entry name" value="COB"/>
    <property type="match status" value="1"/>
</dbReference>
<dbReference type="SUPFAM" id="SSF81648">
    <property type="entry name" value="a domain/subunit of cytochrome bc1 complex (Ubiquinol-cytochrome c reductase)"/>
    <property type="match status" value="1"/>
</dbReference>
<dbReference type="SUPFAM" id="SSF81342">
    <property type="entry name" value="Transmembrane di-heme cytochromes"/>
    <property type="match status" value="1"/>
</dbReference>
<dbReference type="PROSITE" id="PS51003">
    <property type="entry name" value="CYTB_CTER"/>
    <property type="match status" value="1"/>
</dbReference>
<dbReference type="PROSITE" id="PS51002">
    <property type="entry name" value="CYTB_NTER"/>
    <property type="match status" value="1"/>
</dbReference>
<protein>
    <recommendedName>
        <fullName>Cytochrome b</fullName>
    </recommendedName>
    <alternativeName>
        <fullName>Complex III subunit 3</fullName>
    </alternativeName>
    <alternativeName>
        <fullName>Complex III subunit III</fullName>
    </alternativeName>
    <alternativeName>
        <fullName>Cytochrome b-c1 complex subunit 3</fullName>
    </alternativeName>
    <alternativeName>
        <fullName>Ubiquinol-cytochrome-c reductase complex cytochrome b subunit</fullName>
    </alternativeName>
</protein>
<proteinExistence type="inferred from homology"/>